<feature type="chain" id="PRO_0000375860" description="Progesterone receptor">
    <location>
        <begin position="1"/>
        <end position="935"/>
    </location>
</feature>
<feature type="domain" description="NR LBD" evidence="6">
    <location>
        <begin position="681"/>
        <end position="915"/>
    </location>
</feature>
<feature type="DNA-binding region" description="Nuclear receptor" evidence="5">
    <location>
        <begin position="569"/>
        <end position="641"/>
    </location>
</feature>
<feature type="zinc finger region" description="NR C4-type" evidence="5">
    <location>
        <begin position="569"/>
        <end position="589"/>
    </location>
</feature>
<feature type="zinc finger region" description="NR C4-type" evidence="5">
    <location>
        <begin position="605"/>
        <end position="629"/>
    </location>
</feature>
<feature type="region of interest" description="Modulating, Pro-Rich">
    <location>
        <begin position="1"/>
        <end position="568"/>
    </location>
</feature>
<feature type="region of interest" description="AF3; mediates transcriptional activation" evidence="2">
    <location>
        <begin position="1"/>
        <end position="164"/>
    </location>
</feature>
<feature type="region of interest" description="Disordered" evidence="7">
    <location>
        <begin position="1"/>
        <end position="50"/>
    </location>
</feature>
<feature type="region of interest" description="Disordered" evidence="7">
    <location>
        <begin position="62"/>
        <end position="159"/>
    </location>
</feature>
<feature type="region of interest" description="Mediates transcriptional transrepression" evidence="2">
    <location>
        <begin position="165"/>
        <end position="305"/>
    </location>
</feature>
<feature type="region of interest" description="Disordered" evidence="7">
    <location>
        <begin position="185"/>
        <end position="252"/>
    </location>
</feature>
<feature type="region of interest" description="Disordered" evidence="7">
    <location>
        <begin position="331"/>
        <end position="365"/>
    </location>
</feature>
<feature type="region of interest" description="Disordered" evidence="7">
    <location>
        <begin position="415"/>
        <end position="452"/>
    </location>
</feature>
<feature type="region of interest" description="AF1; mediates transcriptional activation" evidence="2">
    <location>
        <begin position="456"/>
        <end position="548"/>
    </location>
</feature>
<feature type="region of interest" description="AF2; mediates transcriptional activation" evidence="2">
    <location>
        <begin position="689"/>
        <end position="935"/>
    </location>
</feature>
<feature type="short sequence motif" description="LXXL motif 1" evidence="2">
    <location>
        <begin position="55"/>
        <end position="59"/>
    </location>
</feature>
<feature type="short sequence motif" description="LXXL motif 2" evidence="2">
    <location>
        <begin position="115"/>
        <end position="119"/>
    </location>
</feature>
<feature type="short sequence motif" description="Nuclear localization signal" evidence="4">
    <location>
        <begin position="183"/>
        <end position="187"/>
    </location>
</feature>
<feature type="compositionally biased region" description="Polar residues" evidence="7">
    <location>
        <begin position="191"/>
        <end position="203"/>
    </location>
</feature>
<feature type="compositionally biased region" description="Acidic residues" evidence="7">
    <location>
        <begin position="220"/>
        <end position="231"/>
    </location>
</feature>
<feature type="compositionally biased region" description="Low complexity" evidence="7">
    <location>
        <begin position="232"/>
        <end position="246"/>
    </location>
</feature>
<feature type="compositionally biased region" description="Low complexity" evidence="7">
    <location>
        <begin position="335"/>
        <end position="356"/>
    </location>
</feature>
<feature type="compositionally biased region" description="Pro residues" evidence="7">
    <location>
        <begin position="418"/>
        <end position="434"/>
    </location>
</feature>
<feature type="compositionally biased region" description="Low complexity" evidence="7">
    <location>
        <begin position="435"/>
        <end position="452"/>
    </location>
</feature>
<feature type="modified residue" description="Phosphoserine" evidence="2">
    <location>
        <position position="20"/>
    </location>
</feature>
<feature type="modified residue" description="Phosphoserine" evidence="2">
    <location>
        <position position="81"/>
    </location>
</feature>
<feature type="modified residue" description="Phosphoserine" evidence="2">
    <location>
        <position position="130"/>
    </location>
</feature>
<feature type="modified residue" description="Phosphoserine" evidence="2">
    <location>
        <position position="162"/>
    </location>
</feature>
<feature type="modified residue" description="Phosphoserine" evidence="2">
    <location>
        <position position="190"/>
    </location>
</feature>
<feature type="modified residue" description="Phosphoserine" evidence="2">
    <location>
        <position position="213"/>
    </location>
</feature>
<feature type="modified residue" description="Phosphoserine; by MAPK1" evidence="2">
    <location>
        <position position="294"/>
    </location>
</feature>
<feature type="modified residue" description="Phosphoserine; by MAPK" evidence="2">
    <location>
        <position position="345"/>
    </location>
</feature>
<feature type="modified residue" description="Phosphoserine; by CDK2" evidence="2">
    <location>
        <position position="400"/>
    </location>
</feature>
<feature type="modified residue" description="Phosphoserine" evidence="2">
    <location>
        <position position="678"/>
    </location>
</feature>
<feature type="cross-link" description="Glycyl lysine isopeptide (Lys-Gly) (interchain with G-Cter in SUMO); alternate" evidence="1">
    <location>
        <position position="388"/>
    </location>
</feature>
<feature type="cross-link" description="Glycyl lysine isopeptide (Lys-Gly) (interchain with G-Cter in ubiquitin); alternate" evidence="2">
    <location>
        <position position="388"/>
    </location>
</feature>
<feature type="cross-link" description="Glycyl lysine isopeptide (Lys-Gly) (interchain with G-Cter in SUMO)" evidence="1">
    <location>
        <position position="533"/>
    </location>
</feature>
<organism>
    <name type="scientific">Pithecia irrorata</name>
    <name type="common">Gray monk saki</name>
    <dbReference type="NCBI Taxonomy" id="30598"/>
    <lineage>
        <taxon>Eukaryota</taxon>
        <taxon>Metazoa</taxon>
        <taxon>Chordata</taxon>
        <taxon>Craniata</taxon>
        <taxon>Vertebrata</taxon>
        <taxon>Euteleostomi</taxon>
        <taxon>Mammalia</taxon>
        <taxon>Eutheria</taxon>
        <taxon>Euarchontoglires</taxon>
        <taxon>Primates</taxon>
        <taxon>Haplorrhini</taxon>
        <taxon>Platyrrhini</taxon>
        <taxon>Pitheciidae</taxon>
        <taxon>Pitheciinae</taxon>
        <taxon>Pithecia</taxon>
    </lineage>
</organism>
<sequence>MTELKAKGPRAPHVAGSPSSPKVGSPLPCSQAAGPFPGSQTSDTLPEASALPISLDGLLFPRICQGQDPTDEKTQDQQSLSDVZGAYSRVEATRGAGGSSSRPPEKDSGLLDSVLDTLWEPSGPGQSQPSPPACEVTSSWCLFGPELPEDPPAAPATQRVLSPLMSRSGGKAGDSSGMAAAHKVLPRGLSPSRQLLLPTSGSPHWSGAPVKPSPQPAAVEVEEEDGSESEDSAGPLLKGKPRALGGAAAGGGVAAVPPGAAAGGLSLVPKEDSRFSAPRVALVEQDAPMAPGRSPLATTVTDFIHVPILPLSHALLAARTRQLLEDESYDGGAGAASAFAPPRSSPSASSTPVPGGDFPDCAYAPEAEPKDDAYPLYGDFQPPALKIKEEEEGAEASARSPRSYLVAGASPAAFPDFPLGPPPSLPPRAPPPRPGEAAVTAAPASASVSSASSSGSTLECILYKAEGAPSQQGQFAPPPCKAPGAGGCLLPRDSLPSTSASAAATAAGAAPGLYPALGLNGLPQLGYQAAVLKEGLPQVYPPYLNYLRPDSEASQSPQYSFESLPQKICLICGDEASGCHYGVLTCGSCKVFFKRAMEGQHNYLCAGRNDCIVDKIRRKNCPACRLRKCCQAGMVLGGRKFKKFNKVRVMRALDAVALPQPVGIPNENQALSQRFTFSPSQDIQLIPPLINLLLSIEPDVIFAGHDNTKPDTSSSLLTSLNQLGERQLLSVVKWSKSLPGFRNLHIDDQITLIQYSWMSLMVFGLGWRSYKHVSGQMLYFAPDLILNEQRMKESSFYSLCLTMWQIPQEFVKLQVSQEEFLCMKVLLLLNTIPLEGLRSQTQFEEMRSSYIRELIKAIGLRQKGVVSSSQRFYQLTKLLDNLHDLVKQLHLYCLNTFIQSRALSVEFPEMMSEVIAAQLPKILAGMVKPLLFHKK</sequence>
<evidence type="ECO:0000250" key="1"/>
<evidence type="ECO:0000250" key="2">
    <source>
        <dbReference type="UniProtKB" id="P06401"/>
    </source>
</evidence>
<evidence type="ECO:0000250" key="3">
    <source>
        <dbReference type="UniProtKB" id="Q00175"/>
    </source>
</evidence>
<evidence type="ECO:0000255" key="4"/>
<evidence type="ECO:0000255" key="5">
    <source>
        <dbReference type="PROSITE-ProRule" id="PRU00407"/>
    </source>
</evidence>
<evidence type="ECO:0000255" key="6">
    <source>
        <dbReference type="PROSITE-ProRule" id="PRU01189"/>
    </source>
</evidence>
<evidence type="ECO:0000256" key="7">
    <source>
        <dbReference type="SAM" id="MobiDB-lite"/>
    </source>
</evidence>
<evidence type="ECO:0000305" key="8"/>
<proteinExistence type="inferred from homology"/>
<dbReference type="EMBL" id="DQ485134">
    <property type="protein sequence ID" value="ABE73085.1"/>
    <property type="molecule type" value="Genomic_DNA"/>
</dbReference>
<dbReference type="GO" id="GO:0005737">
    <property type="term" value="C:cytoplasm"/>
    <property type="evidence" value="ECO:0007669"/>
    <property type="project" value="UniProtKB-SubCell"/>
</dbReference>
<dbReference type="GO" id="GO:0005654">
    <property type="term" value="C:nucleoplasm"/>
    <property type="evidence" value="ECO:0007669"/>
    <property type="project" value="UniProtKB-ARBA"/>
</dbReference>
<dbReference type="GO" id="GO:0003707">
    <property type="term" value="F:nuclear steroid receptor activity"/>
    <property type="evidence" value="ECO:0007669"/>
    <property type="project" value="InterPro"/>
</dbReference>
<dbReference type="GO" id="GO:0043565">
    <property type="term" value="F:sequence-specific DNA binding"/>
    <property type="evidence" value="ECO:0007669"/>
    <property type="project" value="InterPro"/>
</dbReference>
<dbReference type="GO" id="GO:0005496">
    <property type="term" value="F:steroid binding"/>
    <property type="evidence" value="ECO:0007669"/>
    <property type="project" value="UniProtKB-KW"/>
</dbReference>
<dbReference type="GO" id="GO:0008270">
    <property type="term" value="F:zinc ion binding"/>
    <property type="evidence" value="ECO:0007669"/>
    <property type="project" value="UniProtKB-KW"/>
</dbReference>
<dbReference type="CDD" id="cd07172">
    <property type="entry name" value="NR_DBD_GR_PR"/>
    <property type="match status" value="1"/>
</dbReference>
<dbReference type="CDD" id="cd07074">
    <property type="entry name" value="NR_LBD_PR"/>
    <property type="match status" value="1"/>
</dbReference>
<dbReference type="FunFam" id="1.10.565.10:FF:000004">
    <property type="entry name" value="Androgen receptor variant"/>
    <property type="match status" value="1"/>
</dbReference>
<dbReference type="FunFam" id="3.30.50.10:FF:000027">
    <property type="entry name" value="Progesterone receptor"/>
    <property type="match status" value="1"/>
</dbReference>
<dbReference type="Gene3D" id="3.30.50.10">
    <property type="entry name" value="Erythroid Transcription Factor GATA-1, subunit A"/>
    <property type="match status" value="1"/>
</dbReference>
<dbReference type="Gene3D" id="1.10.565.10">
    <property type="entry name" value="Retinoid X Receptor"/>
    <property type="match status" value="1"/>
</dbReference>
<dbReference type="InterPro" id="IPR035500">
    <property type="entry name" value="NHR-like_dom_sf"/>
</dbReference>
<dbReference type="InterPro" id="IPR000536">
    <property type="entry name" value="Nucl_hrmn_rcpt_lig-bd"/>
</dbReference>
<dbReference type="InterPro" id="IPR050200">
    <property type="entry name" value="Nuclear_hormone_rcpt_NR3"/>
</dbReference>
<dbReference type="InterPro" id="IPR001723">
    <property type="entry name" value="Nuclear_hrmn_rcpt"/>
</dbReference>
<dbReference type="InterPro" id="IPR000128">
    <property type="entry name" value="Progest_rcpt"/>
</dbReference>
<dbReference type="InterPro" id="IPR001628">
    <property type="entry name" value="Znf_hrmn_rcpt"/>
</dbReference>
<dbReference type="InterPro" id="IPR013088">
    <property type="entry name" value="Znf_NHR/GATA"/>
</dbReference>
<dbReference type="PANTHER" id="PTHR48092">
    <property type="entry name" value="KNIRPS-RELATED PROTEIN-RELATED"/>
    <property type="match status" value="1"/>
</dbReference>
<dbReference type="Pfam" id="PF00104">
    <property type="entry name" value="Hormone_recep"/>
    <property type="match status" value="1"/>
</dbReference>
<dbReference type="Pfam" id="PF02161">
    <property type="entry name" value="Prog_receptor"/>
    <property type="match status" value="1"/>
</dbReference>
<dbReference type="Pfam" id="PF00105">
    <property type="entry name" value="zf-C4"/>
    <property type="match status" value="1"/>
</dbReference>
<dbReference type="PRINTS" id="PR00544">
    <property type="entry name" value="PROGESTRONER"/>
</dbReference>
<dbReference type="PRINTS" id="PR00398">
    <property type="entry name" value="STRDHORMONER"/>
</dbReference>
<dbReference type="PRINTS" id="PR00047">
    <property type="entry name" value="STROIDFINGER"/>
</dbReference>
<dbReference type="SMART" id="SM00430">
    <property type="entry name" value="HOLI"/>
    <property type="match status" value="1"/>
</dbReference>
<dbReference type="SMART" id="SM00399">
    <property type="entry name" value="ZnF_C4"/>
    <property type="match status" value="1"/>
</dbReference>
<dbReference type="SUPFAM" id="SSF57716">
    <property type="entry name" value="Glucocorticoid receptor-like (DNA-binding domain)"/>
    <property type="match status" value="1"/>
</dbReference>
<dbReference type="SUPFAM" id="SSF48508">
    <property type="entry name" value="Nuclear receptor ligand-binding domain"/>
    <property type="match status" value="1"/>
</dbReference>
<dbReference type="PROSITE" id="PS51843">
    <property type="entry name" value="NR_LBD"/>
    <property type="match status" value="1"/>
</dbReference>
<dbReference type="PROSITE" id="PS00031">
    <property type="entry name" value="NUCLEAR_REC_DBD_1"/>
    <property type="match status" value="1"/>
</dbReference>
<dbReference type="PROSITE" id="PS51030">
    <property type="entry name" value="NUCLEAR_REC_DBD_2"/>
    <property type="match status" value="1"/>
</dbReference>
<keyword id="KW-0963">Cytoplasm</keyword>
<keyword id="KW-0238">DNA-binding</keyword>
<keyword id="KW-1017">Isopeptide bond</keyword>
<keyword id="KW-0446">Lipid-binding</keyword>
<keyword id="KW-0449">Lipoprotein</keyword>
<keyword id="KW-0479">Metal-binding</keyword>
<keyword id="KW-0539">Nucleus</keyword>
<keyword id="KW-0564">Palmitate</keyword>
<keyword id="KW-0597">Phosphoprotein</keyword>
<keyword id="KW-0675">Receptor</keyword>
<keyword id="KW-0754">Steroid-binding</keyword>
<keyword id="KW-0804">Transcription</keyword>
<keyword id="KW-0805">Transcription regulation</keyword>
<keyword id="KW-0832">Ubl conjugation</keyword>
<keyword id="KW-0862">Zinc</keyword>
<keyword id="KW-0863">Zinc-finger</keyword>
<gene>
    <name type="primary">PGR</name>
    <name type="synonym">NR3C3</name>
</gene>
<comment type="function">
    <text evidence="2">The steroid hormones and their receptors are involved in the regulation of eukaryotic gene expression and affect cellular proliferation and differentiation in target tissues. Transcriptional activator of several progesteron-dependent promoters in a variety of cell types. Involved in activation of SRC-dependent MAPK signaling on hormone stimulation.</text>
</comment>
<comment type="subunit">
    <text evidence="2 3">Interacts with SMARD1 and UNC45A. Interacts with CUEDC2; the interaction promotes ubiquitination, decreases sumoylation, and represses transcriptional activity. Interacts with PIAS3; the interaction promotes sumoylation of PR in a hormone-dependent manner, inhibits DNA-binding, and alters nuclear export. Interacts with SP1; the interaction requires ligand-induced phosphorylation on Ser-344 by ERK1/2-MAPK. Interacts with PRMT2. Interacts with NCOA2 and NCOA1. Interacts with KLF9. Interacts with GTF2B (By similarity).</text>
</comment>
<comment type="subcellular location">
    <subcellularLocation>
        <location>Nucleus</location>
    </subcellularLocation>
    <subcellularLocation>
        <location>Cytoplasm</location>
    </subcellularLocation>
    <text evidence="1">Nucleoplasmic shuttling is both hormone- and cell cycle-dependent. On hormone stimulation, retained in the cytoplasm in the G(1) and G(2)/M phases (By similarity).</text>
</comment>
<comment type="domain">
    <text>Composed of three domains: a modulating N-terminal domain, a DNA-binding domain and a C-terminal ligand-binding domain.</text>
</comment>
<comment type="PTM">
    <text evidence="1">Phosphorylated on multiple serine sites. Several of these sites are hormone-dependent. Phosphorylation on Ser-294 is highly hormone-dependent and modulates ubiquitination and sumoylation on Lys-388. Phosphorylation on Ser-345 requires induction by hormone. Basal phosphorylation on Ser-81, Ser-162, Ser-190 and Ser-400 is increased in response to progesterone and can be phosphorylated in vitro by the CDK2-A1 complex. Increased levels of phosphorylation on Ser-400 also in the presence of EGF, heregulin, IGF, PMA and FBS. Phosphorylation at this site by CDK2 is ligand-independent, and increases nuclear translocation and transcriptional activity. Phosphorylation at Ser-162 and Ser-294, but not at Ser-190, is impaired during the G(2)/M phase of the cell cycle. Phosphorylation on Ser-345 by ERK1/2 MAPK is required for interaction with SP1 (By similarity).</text>
</comment>
<comment type="PTM">
    <text evidence="1">Sumoylation is hormone-dependent and represses transcriptional activity. Sumoylation on all three sites is enhanced by PIAS3. Desumoylated by SENP1. Sumoylation on Lys-388, the main site of sumoylation, is repressed by ubiquitination on the same site, and modulated by phosphorylation at Ser-294 (By similarity).</text>
</comment>
<comment type="PTM">
    <text evidence="1">Ubiquitination is hormone-dependent and represses sumoylation on the same site. Promoted by MAPK-mediated phosphorylation on Ser-294 (By similarity).</text>
</comment>
<comment type="PTM">
    <text evidence="1">Palmitoylated by ZDHHC7 and ZDHHC21. Palmitoylation is required for plasma membrane targeting and for rapid intracellular signaling via ERK and AKT kinases and cAMP generation (By similarity).</text>
</comment>
<comment type="similarity">
    <text evidence="8">Belongs to the nuclear hormone receptor family.</text>
</comment>
<protein>
    <recommendedName>
        <fullName>Progesterone receptor</fullName>
        <shortName>PR</shortName>
    </recommendedName>
    <alternativeName>
        <fullName>Nuclear receptor subfamily 3 group C member 3</fullName>
    </alternativeName>
</protein>
<accession>A7XW20</accession>
<name>PRGR_PITIR</name>
<reference key="1">
    <citation type="journal article" date="2008" name="Mol. Phylogenet. Evol.">
        <title>The human progesterone receptor shows evidence of adaptive evolution associated with its ability to act as a transcription factor.</title>
        <authorList>
            <person name="Chen C."/>
            <person name="Opazo J.C."/>
            <person name="Erez O."/>
            <person name="Uddin M."/>
            <person name="Santolaya-Forgas J."/>
            <person name="Goodman M."/>
            <person name="Grossman L.I."/>
            <person name="Romero R."/>
            <person name="Wildman D.E."/>
        </authorList>
    </citation>
    <scope>NUCLEOTIDE SEQUENCE [GENOMIC DNA]</scope>
</reference>